<sequence length="662" mass="67775">APTTAAAVAATGKDTTAAAEGSAAAEKTAAAGEVSAPPTAAVAATGEDATTAAATAAAETTAAAGEAPTTTTAPATTAAGKAPTTAAATAPTTAAAGAPTTATGKAPATAAAPVPTTAASKAPTTAAAATHSTAAAAAPTTAASAAKSKERSTSSSSEEEHCHVKPSKREMCGSKGITKKQCKKKNCCFDPKGHGGIHCFHRKPKGHSHEEHTTTTTKAPTTIQIATTTTTPTTTTTTTKATPTTTTTTKATPTTTTTTKATTTTTTPTTTTTTTKATTTPTTTTTTTPTTTTTKATTTTTTTSGECKMEPSKREDCGYSGITESQCRTKGCCFDSSIPQTKWCFYTLSQVADCKVEPSQRVDCGFRGITADQCRQKNCCFDSSISGTKWCFYSTSQVAATKTTTTPTTTTTPTTTTTTKATTTTPTTTTTTPTTTTTTTTTTKATTTTPTTTTPTTTTTKATTTTPTTTTTTPTTTTTKATTTTPTTTTTTPTTTTTKATTTTPTTTTTTTTTTKATTTTTSGECKMEPSKRADCGYPGITESQCRSKGCCFDSSIPQTKWCFYSLPQVADCKVAPSSRVDCGFGGITADQCRQRNCCFDSSISGTKWCFYSTSQGNAMCSGPPTKRRDCGYPGISSSVCINRGCCWDNSVMNVPWCFYRT</sequence>
<dbReference type="EMBL" id="L02115">
    <property type="protein sequence ID" value="AAA74725.1"/>
    <property type="molecule type" value="mRNA"/>
</dbReference>
<dbReference type="PIR" id="A45155">
    <property type="entry name" value="A45155"/>
</dbReference>
<dbReference type="SMR" id="Q05049"/>
<dbReference type="Proteomes" id="UP000186698">
    <property type="component" value="Unplaced"/>
</dbReference>
<dbReference type="GO" id="GO:0005615">
    <property type="term" value="C:extracellular space"/>
    <property type="evidence" value="ECO:0000318"/>
    <property type="project" value="GO_Central"/>
</dbReference>
<dbReference type="GO" id="GO:0030277">
    <property type="term" value="P:maintenance of gastrointestinal epithelium"/>
    <property type="evidence" value="ECO:0000318"/>
    <property type="project" value="GO_Central"/>
</dbReference>
<dbReference type="CDD" id="cd00111">
    <property type="entry name" value="Trefoil"/>
    <property type="match status" value="5"/>
</dbReference>
<dbReference type="FunFam" id="4.10.110.10:FF:000006">
    <property type="entry name" value="Trefoil factor 1"/>
    <property type="match status" value="5"/>
</dbReference>
<dbReference type="Gene3D" id="4.10.110.10">
    <property type="entry name" value="Spasmolytic Protein, domain 1"/>
    <property type="match status" value="6"/>
</dbReference>
<dbReference type="InterPro" id="IPR017994">
    <property type="entry name" value="P_trefoil_chordata"/>
</dbReference>
<dbReference type="InterPro" id="IPR017957">
    <property type="entry name" value="P_trefoil_CS"/>
</dbReference>
<dbReference type="InterPro" id="IPR000519">
    <property type="entry name" value="P_trefoil_dom"/>
</dbReference>
<dbReference type="InterPro" id="IPR044913">
    <property type="entry name" value="P_trefoil_dom_sf"/>
</dbReference>
<dbReference type="PANTHER" id="PTHR13826">
    <property type="entry name" value="INTESTINAL TREFOIL FACTOR-RELATED"/>
    <property type="match status" value="1"/>
</dbReference>
<dbReference type="PANTHER" id="PTHR13826:SF23">
    <property type="entry name" value="TREFOIL FACTOR 3 ISOFORM X2"/>
    <property type="match status" value="1"/>
</dbReference>
<dbReference type="Pfam" id="PF00088">
    <property type="entry name" value="Trefoil"/>
    <property type="match status" value="6"/>
</dbReference>
<dbReference type="PRINTS" id="PR00680">
    <property type="entry name" value="PTREFOIL"/>
</dbReference>
<dbReference type="SMART" id="SM00018">
    <property type="entry name" value="PD"/>
    <property type="match status" value="6"/>
</dbReference>
<dbReference type="SUPFAM" id="SSF57492">
    <property type="entry name" value="Trefoil"/>
    <property type="match status" value="6"/>
</dbReference>
<dbReference type="PROSITE" id="PS00025">
    <property type="entry name" value="P_TREFOIL_1"/>
    <property type="match status" value="6"/>
</dbReference>
<dbReference type="PROSITE" id="PS51448">
    <property type="entry name" value="P_TREFOIL_2"/>
    <property type="match status" value="6"/>
</dbReference>
<comment type="function">
    <text>Could be involved in defense against microbial infections. Protects the epithelia from external environment.</text>
</comment>
<comment type="subcellular location">
    <subcellularLocation>
        <location>Secreted</location>
    </subcellularLocation>
</comment>
<comment type="alternative products">
    <event type="alternative splicing"/>
    <isoform>
        <id>Q05049-1</id>
        <name>1</name>
        <sequence type="displayed"/>
    </isoform>
    <isoform>
        <id>Q05049-2</id>
        <name>2</name>
        <sequence type="described" ref="VSP_004650"/>
    </isoform>
    <isoform>
        <id>Q05049-3</id>
        <name>3</name>
        <sequence type="described" ref="VSP_004651"/>
    </isoform>
    <isoform>
        <id>Q05049-4</id>
        <name>4</name>
        <sequence type="described" ref="VSP_004647 VSP_004648"/>
    </isoform>
    <isoform>
        <id>Q05049-5</id>
        <name>5</name>
        <sequence type="described" ref="VSP_004646 VSP_004649 VSP_004650"/>
    </isoform>
    <isoform>
        <id>Q05049-6</id>
        <name>6</name>
        <sequence type="described" ref="VSP_004646 VSP_004648"/>
    </isoform>
    <isoform>
        <id>Q05049-7</id>
        <name>7</name>
        <sequence type="described" ref="VSP_004647"/>
    </isoform>
    <text>Additional isoforms seem to exist. Experimental confirmation may be lacking for some isoforms.</text>
</comment>
<comment type="tissue specificity">
    <text>Skin.</text>
</comment>
<comment type="PTM">
    <text>Extensively O-glycosylated.</text>
</comment>
<organism>
    <name type="scientific">Xenopus laevis</name>
    <name type="common">African clawed frog</name>
    <dbReference type="NCBI Taxonomy" id="8355"/>
    <lineage>
        <taxon>Eukaryota</taxon>
        <taxon>Metazoa</taxon>
        <taxon>Chordata</taxon>
        <taxon>Craniata</taxon>
        <taxon>Vertebrata</taxon>
        <taxon>Euteleostomi</taxon>
        <taxon>Amphibia</taxon>
        <taxon>Batrachia</taxon>
        <taxon>Anura</taxon>
        <taxon>Pipoidea</taxon>
        <taxon>Pipidae</taxon>
        <taxon>Xenopodinae</taxon>
        <taxon>Xenopus</taxon>
        <taxon>Xenopus</taxon>
    </lineage>
</organism>
<proteinExistence type="evidence at transcript level"/>
<name>MUC1_XENLA</name>
<keyword id="KW-0025">Alternative splicing</keyword>
<keyword id="KW-1015">Disulfide bond</keyword>
<keyword id="KW-0325">Glycoprotein</keyword>
<keyword id="KW-1185">Reference proteome</keyword>
<keyword id="KW-0677">Repeat</keyword>
<keyword id="KW-0964">Secreted</keyword>
<reference key="1">
    <citation type="journal article" date="1992" name="J. Biol. Chem.">
        <title>P-domains as shuffled cysteine-rich modules in integumentary mucin C.1 (FIM-C.1) from Xenopus laevis. Polydispersity and genetic polymorphism.</title>
        <authorList>
            <person name="Hauser F."/>
            <person name="Hoffmann W."/>
        </authorList>
    </citation>
    <scope>NUCLEOTIDE SEQUENCE [MRNA] (ISOFORMS 1; 2; 3; 4; 5; 6 AND 7)</scope>
    <source>
        <tissue>Skin</tissue>
    </source>
</reference>
<protein>
    <recommendedName>
        <fullName>Integumentary mucin C.1</fullName>
    </recommendedName>
    <alternativeName>
        <fullName>FIM-C.1</fullName>
    </alternativeName>
</protein>
<accession>Q05049</accession>
<evidence type="ECO:0000255" key="1">
    <source>
        <dbReference type="PROSITE-ProRule" id="PRU00779"/>
    </source>
</evidence>
<evidence type="ECO:0000256" key="2">
    <source>
        <dbReference type="SAM" id="MobiDB-lite"/>
    </source>
</evidence>
<evidence type="ECO:0000303" key="3">
    <source>
    </source>
</evidence>
<feature type="chain" id="PRO_0000162379" description="Integumentary mucin C.1">
    <location>
        <begin position="1" status="less than"/>
        <end position="662"/>
    </location>
</feature>
<feature type="repeat" description="1-1">
    <location>
        <begin position="81"/>
        <end position="88"/>
    </location>
</feature>
<feature type="repeat" description="1-2">
    <location>
        <begin position="89"/>
        <end position="96"/>
    </location>
</feature>
<feature type="repeat" description="1-3">
    <location>
        <begin position="97"/>
        <end position="104"/>
    </location>
</feature>
<feature type="repeat" description="1-4">
    <location>
        <begin position="105"/>
        <end position="112"/>
    </location>
</feature>
<feature type="repeat" description="1-5">
    <location>
        <begin position="113"/>
        <end position="120"/>
    </location>
</feature>
<feature type="repeat" description="1-6">
    <location>
        <begin position="121"/>
        <end position="128"/>
    </location>
</feature>
<feature type="repeat" description="1-7">
    <location>
        <begin position="129"/>
        <end position="136"/>
    </location>
</feature>
<feature type="repeat" description="1-8">
    <location>
        <begin position="137"/>
        <end position="144"/>
    </location>
</feature>
<feature type="domain" description="P-type 1" evidence="1">
    <location>
        <begin position="160"/>
        <end position="203"/>
    </location>
</feature>
<feature type="repeat" description="2-1">
    <location>
        <begin position="218"/>
        <end position="224"/>
    </location>
</feature>
<feature type="repeat" description="2-2">
    <location>
        <begin position="225"/>
        <end position="239"/>
    </location>
</feature>
<feature type="repeat" description="2-3">
    <location>
        <begin position="240"/>
        <end position="249"/>
    </location>
</feature>
<feature type="repeat" description="2-4">
    <location>
        <begin position="250"/>
        <end position="259"/>
    </location>
</feature>
<feature type="repeat" description="2-5">
    <location>
        <begin position="260"/>
        <end position="275"/>
    </location>
</feature>
<feature type="repeat" description="2-6">
    <location>
        <begin position="276"/>
        <end position="287"/>
    </location>
</feature>
<feature type="repeat" description="2-7">
    <location>
        <begin position="288"/>
        <end position="294"/>
    </location>
</feature>
<feature type="repeat" description="2-8">
    <location>
        <begin position="295"/>
        <end position="301"/>
    </location>
</feature>
<feature type="domain" description="P-type 2" evidence="1">
    <location>
        <begin position="305"/>
        <end position="348"/>
    </location>
</feature>
<feature type="domain" description="P-type 3" evidence="1">
    <location>
        <begin position="352"/>
        <end position="395"/>
    </location>
</feature>
<feature type="repeat" description="3-1">
    <location>
        <begin position="402"/>
        <end position="411"/>
    </location>
</feature>
<feature type="repeat" description="3-2">
    <location>
        <begin position="412"/>
        <end position="419"/>
    </location>
</feature>
<feature type="repeat" description="3-3">
    <location>
        <begin position="420"/>
        <end position="431"/>
    </location>
</feature>
<feature type="repeat" description="3-4">
    <location>
        <begin position="432"/>
        <end position="443"/>
    </location>
</feature>
<feature type="repeat" description="3-5">
    <location>
        <begin position="444"/>
        <end position="453"/>
    </location>
</feature>
<feature type="repeat" description="3-6">
    <location>
        <begin position="454"/>
        <end position="460"/>
    </location>
</feature>
<feature type="repeat" description="3-7">
    <location>
        <begin position="461"/>
        <end position="472"/>
    </location>
</feature>
<feature type="repeat" description="3-8">
    <location>
        <begin position="473"/>
        <end position="479"/>
    </location>
</feature>
<feature type="repeat" description="3-9">
    <location>
        <begin position="480"/>
        <end position="491"/>
    </location>
</feature>
<feature type="repeat" description="3-10">
    <location>
        <begin position="492"/>
        <end position="498"/>
    </location>
</feature>
<feature type="repeat" description="3-11">
    <location>
        <begin position="499"/>
        <end position="515"/>
    </location>
</feature>
<feature type="repeat" description="3-12">
    <location>
        <begin position="516"/>
        <end position="522"/>
    </location>
</feature>
<feature type="domain" description="P-type 4" evidence="1">
    <location>
        <begin position="524"/>
        <end position="567"/>
    </location>
</feature>
<feature type="domain" description="P-type 5" evidence="1">
    <location>
        <begin position="571"/>
        <end position="614"/>
    </location>
</feature>
<feature type="domain" description="P-type 6" evidence="1">
    <location>
        <begin position="619"/>
        <end position="662"/>
    </location>
</feature>
<feature type="region of interest" description="Disordered" evidence="2">
    <location>
        <begin position="27"/>
        <end position="109"/>
    </location>
</feature>
<feature type="region of interest" description="8 X 8 AA approximate tandem repeats, Ala/Thr-rich">
    <location>
        <begin position="81"/>
        <end position="144"/>
    </location>
</feature>
<feature type="region of interest" description="Disordered" evidence="2">
    <location>
        <begin position="122"/>
        <end position="170"/>
    </location>
</feature>
<feature type="region of interest" description="8 X approximate tandem repeats, Thr-rich">
    <location>
        <begin position="218"/>
        <end position="301"/>
    </location>
</feature>
<feature type="region of interest" description="Disordered" evidence="2">
    <location>
        <begin position="231"/>
        <end position="297"/>
    </location>
</feature>
<feature type="region of interest" description="12 X approximate tandem repeats, Thr-rich">
    <location>
        <begin position="402"/>
        <end position="522"/>
    </location>
</feature>
<feature type="region of interest" description="Disordered" evidence="2">
    <location>
        <begin position="404"/>
        <end position="516"/>
    </location>
</feature>
<feature type="compositionally biased region" description="Low complexity" evidence="2">
    <location>
        <begin position="122"/>
        <end position="146"/>
    </location>
</feature>
<feature type="compositionally biased region" description="Basic and acidic residues" evidence="2">
    <location>
        <begin position="147"/>
        <end position="170"/>
    </location>
</feature>
<feature type="disulfide bond" evidence="1">
    <location>
        <begin position="162"/>
        <end position="188"/>
    </location>
</feature>
<feature type="disulfide bond" evidence="1">
    <location>
        <begin position="172"/>
        <end position="187"/>
    </location>
</feature>
<feature type="disulfide bond" evidence="1">
    <location>
        <begin position="182"/>
        <end position="199"/>
    </location>
</feature>
<feature type="disulfide bond" evidence="1">
    <location>
        <begin position="307"/>
        <end position="333"/>
    </location>
</feature>
<feature type="disulfide bond" evidence="1">
    <location>
        <begin position="317"/>
        <end position="332"/>
    </location>
</feature>
<feature type="disulfide bond" evidence="1">
    <location>
        <begin position="327"/>
        <end position="344"/>
    </location>
</feature>
<feature type="disulfide bond" evidence="1">
    <location>
        <begin position="354"/>
        <end position="380"/>
    </location>
</feature>
<feature type="disulfide bond" evidence="1">
    <location>
        <begin position="364"/>
        <end position="379"/>
    </location>
</feature>
<feature type="disulfide bond" evidence="1">
    <location>
        <begin position="374"/>
        <end position="391"/>
    </location>
</feature>
<feature type="disulfide bond" evidence="1">
    <location>
        <begin position="526"/>
        <end position="552"/>
    </location>
</feature>
<feature type="disulfide bond" evidence="1">
    <location>
        <begin position="536"/>
        <end position="551"/>
    </location>
</feature>
<feature type="disulfide bond" evidence="1">
    <location>
        <begin position="546"/>
        <end position="563"/>
    </location>
</feature>
<feature type="disulfide bond" evidence="1">
    <location>
        <begin position="573"/>
        <end position="599"/>
    </location>
</feature>
<feature type="disulfide bond" evidence="1">
    <location>
        <begin position="583"/>
        <end position="598"/>
    </location>
</feature>
<feature type="disulfide bond" evidence="1">
    <location>
        <begin position="593"/>
        <end position="610"/>
    </location>
</feature>
<feature type="disulfide bond" evidence="1">
    <location>
        <begin position="621"/>
        <end position="647"/>
    </location>
</feature>
<feature type="disulfide bond" evidence="1">
    <location>
        <begin position="631"/>
        <end position="646"/>
    </location>
</feature>
<feature type="disulfide bond" evidence="1">
    <location>
        <begin position="641"/>
        <end position="658"/>
    </location>
</feature>
<feature type="splice variant" id="VSP_004646" description="In isoform 5 and isoform 6." evidence="3">
    <location>
        <begin position="240"/>
        <end position="259"/>
    </location>
</feature>
<feature type="splice variant" id="VSP_004647" description="In isoform 4 and isoform 7." evidence="3">
    <location>
        <begin position="250"/>
        <end position="259"/>
    </location>
</feature>
<feature type="splice variant" id="VSP_004648" description="In isoform 4 and isoform 6." evidence="3">
    <location>
        <begin position="276"/>
        <end position="294"/>
    </location>
</feature>
<feature type="splice variant" id="VSP_004649" description="In isoform 5." evidence="3">
    <location>
        <position position="278"/>
    </location>
</feature>
<feature type="splice variant" id="VSP_004650" description="In isoform 2 and isoform 5." evidence="3">
    <location>
        <begin position="306"/>
        <end position="350"/>
    </location>
</feature>
<feature type="splice variant" id="VSP_004651" description="In isoform 3." evidence="3">
    <location>
        <begin position="420"/>
        <end position="498"/>
    </location>
</feature>
<feature type="sequence variant">
    <original>K</original>
    <variation>E</variation>
    <location>
        <position position="276"/>
    </location>
</feature>
<feature type="sequence variant">
    <original>C</original>
    <variation>R</variation>
    <location>
        <position position="354"/>
    </location>
</feature>
<feature type="sequence variant">
    <original>T</original>
    <variation>A</variation>
    <location>
        <position position="415"/>
    </location>
</feature>
<feature type="non-terminal residue">
    <location>
        <position position="1"/>
    </location>
</feature>